<reference key="1">
    <citation type="journal article" date="2008" name="DNA Res.">
        <title>Complete genome sequence and comparative analysis of the wild-type commensal Escherichia coli strain SE11 isolated from a healthy adult.</title>
        <authorList>
            <person name="Oshima K."/>
            <person name="Toh H."/>
            <person name="Ogura Y."/>
            <person name="Sasamoto H."/>
            <person name="Morita H."/>
            <person name="Park S.-H."/>
            <person name="Ooka T."/>
            <person name="Iyoda S."/>
            <person name="Taylor T.D."/>
            <person name="Hayashi T."/>
            <person name="Itoh K."/>
            <person name="Hattori M."/>
        </authorList>
    </citation>
    <scope>NUCLEOTIDE SEQUENCE [LARGE SCALE GENOMIC DNA]</scope>
    <source>
        <strain>SE11</strain>
    </source>
</reference>
<name>MENC_ECOSE</name>
<gene>
    <name evidence="1" type="primary">menC</name>
    <name type="ordered locus">ECSE_2521</name>
</gene>
<keyword id="KW-0456">Lyase</keyword>
<keyword id="KW-0460">Magnesium</keyword>
<keyword id="KW-0474">Menaquinone biosynthesis</keyword>
<keyword id="KW-0479">Metal-binding</keyword>
<evidence type="ECO:0000255" key="1">
    <source>
        <dbReference type="HAMAP-Rule" id="MF_00470"/>
    </source>
</evidence>
<sequence length="320" mass="35469">MRSAQVYRWQIPMDAGVVLRDRRLKTRDGLYVCLREGEREGWGEISPLPGFSQETWEEAQSVLLAWVNNWLAGDCELPQMPSVAFGVSCALAELADTLPQAANYRAAPLCNGDPDDLILKLADMPGEKVAKVKVGLYEAVRDGMVVNLLLEAIPDLHLRLDANRAWTPLKGQQFAKYVNPDYRHRIAFLEEPCKTRDDSRAFARETGIAIAWDESLREPDFAFVAEEGVRAVVIKPTLTGSLEKVREQVQAAHALGLTAVISSSIESSLGLTQLARIAAWLTPDTIPGLDTLDLMQAQQVRRWPGSTLPVVEVDALERLL</sequence>
<proteinExistence type="inferred from homology"/>
<organism>
    <name type="scientific">Escherichia coli (strain SE11)</name>
    <dbReference type="NCBI Taxonomy" id="409438"/>
    <lineage>
        <taxon>Bacteria</taxon>
        <taxon>Pseudomonadati</taxon>
        <taxon>Pseudomonadota</taxon>
        <taxon>Gammaproteobacteria</taxon>
        <taxon>Enterobacterales</taxon>
        <taxon>Enterobacteriaceae</taxon>
        <taxon>Escherichia</taxon>
    </lineage>
</organism>
<feature type="chain" id="PRO_1000125572" description="o-succinylbenzoate synthase">
    <location>
        <begin position="1"/>
        <end position="320"/>
    </location>
</feature>
<feature type="active site" description="Proton donor" evidence="1">
    <location>
        <position position="133"/>
    </location>
</feature>
<feature type="active site" description="Proton acceptor" evidence="1">
    <location>
        <position position="235"/>
    </location>
</feature>
<feature type="binding site" evidence="1">
    <location>
        <position position="161"/>
    </location>
    <ligand>
        <name>Mg(2+)</name>
        <dbReference type="ChEBI" id="CHEBI:18420"/>
    </ligand>
</feature>
<feature type="binding site" evidence="1">
    <location>
        <position position="190"/>
    </location>
    <ligand>
        <name>Mg(2+)</name>
        <dbReference type="ChEBI" id="CHEBI:18420"/>
    </ligand>
</feature>
<feature type="binding site" evidence="1">
    <location>
        <position position="213"/>
    </location>
    <ligand>
        <name>Mg(2+)</name>
        <dbReference type="ChEBI" id="CHEBI:18420"/>
    </ligand>
</feature>
<accession>B6I7K5</accession>
<protein>
    <recommendedName>
        <fullName evidence="1">o-succinylbenzoate synthase</fullName>
        <shortName evidence="1">OSB synthase</shortName>
        <shortName evidence="1">OSBS</shortName>
        <ecNumber evidence="1">4.2.1.113</ecNumber>
    </recommendedName>
    <alternativeName>
        <fullName evidence="1">4-(2'-carboxyphenyl)-4-oxybutyric acid synthase</fullName>
    </alternativeName>
    <alternativeName>
        <fullName evidence="1">o-succinylbenzoic acid synthase</fullName>
    </alternativeName>
</protein>
<comment type="function">
    <text evidence="1">Converts 2-succinyl-6-hydroxy-2,4-cyclohexadiene-1-carboxylate (SHCHC) to 2-succinylbenzoate (OSB).</text>
</comment>
<comment type="catalytic activity">
    <reaction evidence="1">
        <text>(1R,6R)-6-hydroxy-2-succinyl-cyclohexa-2,4-diene-1-carboxylate = 2-succinylbenzoate + H2O</text>
        <dbReference type="Rhea" id="RHEA:10196"/>
        <dbReference type="ChEBI" id="CHEBI:15377"/>
        <dbReference type="ChEBI" id="CHEBI:18325"/>
        <dbReference type="ChEBI" id="CHEBI:58689"/>
        <dbReference type="EC" id="4.2.1.113"/>
    </reaction>
</comment>
<comment type="cofactor">
    <cofactor evidence="1">
        <name>a divalent metal cation</name>
        <dbReference type="ChEBI" id="CHEBI:60240"/>
    </cofactor>
</comment>
<comment type="pathway">
    <text evidence="1">Quinol/quinone metabolism; 1,4-dihydroxy-2-naphthoate biosynthesis; 1,4-dihydroxy-2-naphthoate from chorismate: step 4/7.</text>
</comment>
<comment type="pathway">
    <text evidence="1">Quinol/quinone metabolism; menaquinone biosynthesis.</text>
</comment>
<comment type="similarity">
    <text evidence="1">Belongs to the mandelate racemase/muconate lactonizing enzyme family. MenC type 1 subfamily.</text>
</comment>
<dbReference type="EC" id="4.2.1.113" evidence="1"/>
<dbReference type="EMBL" id="AP009240">
    <property type="protein sequence ID" value="BAG78045.1"/>
    <property type="molecule type" value="Genomic_DNA"/>
</dbReference>
<dbReference type="RefSeq" id="WP_001255609.1">
    <property type="nucleotide sequence ID" value="NC_011415.1"/>
</dbReference>
<dbReference type="SMR" id="B6I7K5"/>
<dbReference type="GeneID" id="75205688"/>
<dbReference type="KEGG" id="ecy:ECSE_2521"/>
<dbReference type="HOGENOM" id="CLU_030273_0_1_6"/>
<dbReference type="UniPathway" id="UPA00079"/>
<dbReference type="UniPathway" id="UPA01057">
    <property type="reaction ID" value="UER00165"/>
</dbReference>
<dbReference type="Proteomes" id="UP000008199">
    <property type="component" value="Chromosome"/>
</dbReference>
<dbReference type="GO" id="GO:0000287">
    <property type="term" value="F:magnesium ion binding"/>
    <property type="evidence" value="ECO:0007669"/>
    <property type="project" value="UniProtKB-UniRule"/>
</dbReference>
<dbReference type="GO" id="GO:0043748">
    <property type="term" value="F:O-succinylbenzoate synthase activity"/>
    <property type="evidence" value="ECO:0007669"/>
    <property type="project" value="UniProtKB-EC"/>
</dbReference>
<dbReference type="GO" id="GO:0009234">
    <property type="term" value="P:menaquinone biosynthetic process"/>
    <property type="evidence" value="ECO:0007669"/>
    <property type="project" value="UniProtKB-UniRule"/>
</dbReference>
<dbReference type="CDD" id="cd03320">
    <property type="entry name" value="OSBS"/>
    <property type="match status" value="1"/>
</dbReference>
<dbReference type="FunFam" id="3.20.20.120:FF:000006">
    <property type="entry name" value="o-succinylbenzoate synthase"/>
    <property type="match status" value="1"/>
</dbReference>
<dbReference type="FunFam" id="3.30.390.10:FF:000005">
    <property type="entry name" value="o-succinylbenzoate synthase"/>
    <property type="match status" value="1"/>
</dbReference>
<dbReference type="Gene3D" id="3.20.20.120">
    <property type="entry name" value="Enolase-like C-terminal domain"/>
    <property type="match status" value="1"/>
</dbReference>
<dbReference type="Gene3D" id="3.30.390.10">
    <property type="entry name" value="Enolase-like, N-terminal domain"/>
    <property type="match status" value="1"/>
</dbReference>
<dbReference type="HAMAP" id="MF_00470">
    <property type="entry name" value="MenC_1"/>
    <property type="match status" value="1"/>
</dbReference>
<dbReference type="InterPro" id="IPR036849">
    <property type="entry name" value="Enolase-like_C_sf"/>
</dbReference>
<dbReference type="InterPro" id="IPR029017">
    <property type="entry name" value="Enolase-like_N"/>
</dbReference>
<dbReference type="InterPro" id="IPR029065">
    <property type="entry name" value="Enolase_C-like"/>
</dbReference>
<dbReference type="InterPro" id="IPR013342">
    <property type="entry name" value="Mandelate_racemase_C"/>
</dbReference>
<dbReference type="InterPro" id="IPR010196">
    <property type="entry name" value="OSB_synthase_MenC1"/>
</dbReference>
<dbReference type="InterPro" id="IPR041338">
    <property type="entry name" value="OSBS_N"/>
</dbReference>
<dbReference type="NCBIfam" id="TIGR01927">
    <property type="entry name" value="menC_gam_Gplu"/>
    <property type="match status" value="1"/>
</dbReference>
<dbReference type="NCBIfam" id="NF003473">
    <property type="entry name" value="PRK05105.1"/>
    <property type="match status" value="1"/>
</dbReference>
<dbReference type="PANTHER" id="PTHR48073:SF2">
    <property type="entry name" value="O-SUCCINYLBENZOATE SYNTHASE"/>
    <property type="match status" value="1"/>
</dbReference>
<dbReference type="PANTHER" id="PTHR48073">
    <property type="entry name" value="O-SUCCINYLBENZOATE SYNTHASE-RELATED"/>
    <property type="match status" value="1"/>
</dbReference>
<dbReference type="Pfam" id="PF21508">
    <property type="entry name" value="MenC_N"/>
    <property type="match status" value="1"/>
</dbReference>
<dbReference type="Pfam" id="PF13378">
    <property type="entry name" value="MR_MLE_C"/>
    <property type="match status" value="1"/>
</dbReference>
<dbReference type="SFLD" id="SFLDS00001">
    <property type="entry name" value="Enolase"/>
    <property type="match status" value="1"/>
</dbReference>
<dbReference type="SFLD" id="SFLDF00009">
    <property type="entry name" value="o-succinylbenzoate_synthase"/>
    <property type="match status" value="1"/>
</dbReference>
<dbReference type="SMART" id="SM00922">
    <property type="entry name" value="MR_MLE"/>
    <property type="match status" value="1"/>
</dbReference>
<dbReference type="SUPFAM" id="SSF51604">
    <property type="entry name" value="Enolase C-terminal domain-like"/>
    <property type="match status" value="1"/>
</dbReference>
<dbReference type="SUPFAM" id="SSF54826">
    <property type="entry name" value="Enolase N-terminal domain-like"/>
    <property type="match status" value="1"/>
</dbReference>